<protein>
    <recommendedName>
        <fullName evidence="1">Malate dehydrogenase</fullName>
        <ecNumber evidence="1">1.1.1.37</ecNumber>
    </recommendedName>
</protein>
<name>MDH_HAEIE</name>
<feature type="chain" id="PRO_1000068589" description="Malate dehydrogenase">
    <location>
        <begin position="1"/>
        <end position="311"/>
    </location>
</feature>
<feature type="active site" description="Proton acceptor" evidence="1">
    <location>
        <position position="177"/>
    </location>
</feature>
<feature type="binding site" evidence="1">
    <location>
        <begin position="7"/>
        <end position="13"/>
    </location>
    <ligand>
        <name>NAD(+)</name>
        <dbReference type="ChEBI" id="CHEBI:57540"/>
    </ligand>
</feature>
<feature type="binding site" evidence="1">
    <location>
        <position position="34"/>
    </location>
    <ligand>
        <name>NAD(+)</name>
        <dbReference type="ChEBI" id="CHEBI:57540"/>
    </ligand>
</feature>
<feature type="binding site" evidence="1">
    <location>
        <position position="81"/>
    </location>
    <ligand>
        <name>substrate</name>
    </ligand>
</feature>
<feature type="binding site" evidence="1">
    <location>
        <position position="87"/>
    </location>
    <ligand>
        <name>substrate</name>
    </ligand>
</feature>
<feature type="binding site" evidence="1">
    <location>
        <position position="94"/>
    </location>
    <ligand>
        <name>NAD(+)</name>
        <dbReference type="ChEBI" id="CHEBI:57540"/>
    </ligand>
</feature>
<feature type="binding site" evidence="1">
    <location>
        <begin position="117"/>
        <end position="119"/>
    </location>
    <ligand>
        <name>NAD(+)</name>
        <dbReference type="ChEBI" id="CHEBI:57540"/>
    </ligand>
</feature>
<feature type="binding site" evidence="1">
    <location>
        <position position="119"/>
    </location>
    <ligand>
        <name>substrate</name>
    </ligand>
</feature>
<feature type="binding site" evidence="1">
    <location>
        <position position="153"/>
    </location>
    <ligand>
        <name>substrate</name>
    </ligand>
</feature>
<feature type="binding site" evidence="1">
    <location>
        <position position="227"/>
    </location>
    <ligand>
        <name>NAD(+)</name>
        <dbReference type="ChEBI" id="CHEBI:57540"/>
    </ligand>
</feature>
<evidence type="ECO:0000255" key="1">
    <source>
        <dbReference type="HAMAP-Rule" id="MF_01516"/>
    </source>
</evidence>
<accession>A5UCQ1</accession>
<gene>
    <name evidence="1" type="primary">mdh</name>
    <name type="ordered locus">CGSHiEE_05985</name>
</gene>
<proteinExistence type="inferred from homology"/>
<reference key="1">
    <citation type="journal article" date="2007" name="Genome Biol.">
        <title>Characterization and modeling of the Haemophilus influenzae core and supragenomes based on the complete genomic sequences of Rd and 12 clinical nontypeable strains.</title>
        <authorList>
            <person name="Hogg J.S."/>
            <person name="Hu F.Z."/>
            <person name="Janto B."/>
            <person name="Boissy R."/>
            <person name="Hayes J."/>
            <person name="Keefe R."/>
            <person name="Post J.C."/>
            <person name="Ehrlich G.D."/>
        </authorList>
    </citation>
    <scope>NUCLEOTIDE SEQUENCE [LARGE SCALE GENOMIC DNA]</scope>
    <source>
        <strain>PittEE</strain>
    </source>
</reference>
<organism>
    <name type="scientific">Haemophilus influenzae (strain PittEE)</name>
    <dbReference type="NCBI Taxonomy" id="374930"/>
    <lineage>
        <taxon>Bacteria</taxon>
        <taxon>Pseudomonadati</taxon>
        <taxon>Pseudomonadota</taxon>
        <taxon>Gammaproteobacteria</taxon>
        <taxon>Pasteurellales</taxon>
        <taxon>Pasteurellaceae</taxon>
        <taxon>Haemophilus</taxon>
    </lineage>
</organism>
<sequence>MKVAVLGAAGGIGQALALLLKLQLPAGTDLALYDIAPVTPGVAVDVSHIPTAVNVKGFSGEDPTPALEGADVVLISAGVARKPGMDRSDLFNINAGIVRGLIEKVAVTCPKACVGIITNPVNTTVAIAAEVLKKAGVYDKRKLFGVTTLDVLRSETFVAELKGLNVSRTSVPVIGGHSGVTILPLLSQVQYAKWNEDEIEPLTKRIQNAGTEVVNAKAGGGSATLSMAQAAARFARSLVKGLSGETVVECTYVEGDGKYARFFSQPVRLGKEGVEEILPIGPLSNFEQQALENMLPTLHADIELGEKFING</sequence>
<keyword id="KW-0520">NAD</keyword>
<keyword id="KW-0560">Oxidoreductase</keyword>
<keyword id="KW-0816">Tricarboxylic acid cycle</keyword>
<dbReference type="EC" id="1.1.1.37" evidence="1"/>
<dbReference type="EMBL" id="CP000671">
    <property type="protein sequence ID" value="ABQ98552.1"/>
    <property type="molecule type" value="Genomic_DNA"/>
</dbReference>
<dbReference type="SMR" id="A5UCQ1"/>
<dbReference type="KEGG" id="hip:CGSHiEE_05985"/>
<dbReference type="HOGENOM" id="CLU_047181_0_1_6"/>
<dbReference type="GO" id="GO:0005737">
    <property type="term" value="C:cytoplasm"/>
    <property type="evidence" value="ECO:0007669"/>
    <property type="project" value="TreeGrafter"/>
</dbReference>
<dbReference type="GO" id="GO:0030060">
    <property type="term" value="F:L-malate dehydrogenase (NAD+) activity"/>
    <property type="evidence" value="ECO:0007669"/>
    <property type="project" value="UniProtKB-UniRule"/>
</dbReference>
<dbReference type="GO" id="GO:0006108">
    <property type="term" value="P:malate metabolic process"/>
    <property type="evidence" value="ECO:0007669"/>
    <property type="project" value="InterPro"/>
</dbReference>
<dbReference type="GO" id="GO:0006099">
    <property type="term" value="P:tricarboxylic acid cycle"/>
    <property type="evidence" value="ECO:0007669"/>
    <property type="project" value="UniProtKB-UniRule"/>
</dbReference>
<dbReference type="CDD" id="cd01337">
    <property type="entry name" value="MDH_glyoxysomal_mitochondrial"/>
    <property type="match status" value="1"/>
</dbReference>
<dbReference type="FunFam" id="3.40.50.720:FF:000017">
    <property type="entry name" value="Malate dehydrogenase"/>
    <property type="match status" value="1"/>
</dbReference>
<dbReference type="FunFam" id="3.90.110.10:FF:000001">
    <property type="entry name" value="Malate dehydrogenase"/>
    <property type="match status" value="1"/>
</dbReference>
<dbReference type="Gene3D" id="3.90.110.10">
    <property type="entry name" value="Lactate dehydrogenase/glycoside hydrolase, family 4, C-terminal"/>
    <property type="match status" value="1"/>
</dbReference>
<dbReference type="Gene3D" id="3.40.50.720">
    <property type="entry name" value="NAD(P)-binding Rossmann-like Domain"/>
    <property type="match status" value="1"/>
</dbReference>
<dbReference type="HAMAP" id="MF_01516">
    <property type="entry name" value="Malate_dehydrog_1"/>
    <property type="match status" value="1"/>
</dbReference>
<dbReference type="InterPro" id="IPR001557">
    <property type="entry name" value="L-lactate/malate_DH"/>
</dbReference>
<dbReference type="InterPro" id="IPR022383">
    <property type="entry name" value="Lactate/malate_DH_C"/>
</dbReference>
<dbReference type="InterPro" id="IPR001236">
    <property type="entry name" value="Lactate/malate_DH_N"/>
</dbReference>
<dbReference type="InterPro" id="IPR015955">
    <property type="entry name" value="Lactate_DH/Glyco_Ohase_4_C"/>
</dbReference>
<dbReference type="InterPro" id="IPR001252">
    <property type="entry name" value="Malate_DH_AS"/>
</dbReference>
<dbReference type="InterPro" id="IPR010097">
    <property type="entry name" value="Malate_DH_type1"/>
</dbReference>
<dbReference type="InterPro" id="IPR023958">
    <property type="entry name" value="Malate_DH_type1_bac"/>
</dbReference>
<dbReference type="InterPro" id="IPR036291">
    <property type="entry name" value="NAD(P)-bd_dom_sf"/>
</dbReference>
<dbReference type="NCBIfam" id="TIGR01772">
    <property type="entry name" value="MDH_euk_gproteo"/>
    <property type="match status" value="1"/>
</dbReference>
<dbReference type="PANTHER" id="PTHR11540">
    <property type="entry name" value="MALATE AND LACTATE DEHYDROGENASE"/>
    <property type="match status" value="1"/>
</dbReference>
<dbReference type="PANTHER" id="PTHR11540:SF16">
    <property type="entry name" value="MALATE DEHYDROGENASE, MITOCHONDRIAL"/>
    <property type="match status" value="1"/>
</dbReference>
<dbReference type="Pfam" id="PF02866">
    <property type="entry name" value="Ldh_1_C"/>
    <property type="match status" value="1"/>
</dbReference>
<dbReference type="Pfam" id="PF00056">
    <property type="entry name" value="Ldh_1_N"/>
    <property type="match status" value="1"/>
</dbReference>
<dbReference type="PIRSF" id="PIRSF000102">
    <property type="entry name" value="Lac_mal_DH"/>
    <property type="match status" value="1"/>
</dbReference>
<dbReference type="SUPFAM" id="SSF56327">
    <property type="entry name" value="LDH C-terminal domain-like"/>
    <property type="match status" value="1"/>
</dbReference>
<dbReference type="SUPFAM" id="SSF51735">
    <property type="entry name" value="NAD(P)-binding Rossmann-fold domains"/>
    <property type="match status" value="1"/>
</dbReference>
<dbReference type="PROSITE" id="PS00068">
    <property type="entry name" value="MDH"/>
    <property type="match status" value="1"/>
</dbReference>
<comment type="function">
    <text evidence="1">Catalyzes the reversible oxidation of malate to oxaloacetate.</text>
</comment>
<comment type="catalytic activity">
    <reaction evidence="1">
        <text>(S)-malate + NAD(+) = oxaloacetate + NADH + H(+)</text>
        <dbReference type="Rhea" id="RHEA:21432"/>
        <dbReference type="ChEBI" id="CHEBI:15378"/>
        <dbReference type="ChEBI" id="CHEBI:15589"/>
        <dbReference type="ChEBI" id="CHEBI:16452"/>
        <dbReference type="ChEBI" id="CHEBI:57540"/>
        <dbReference type="ChEBI" id="CHEBI:57945"/>
        <dbReference type="EC" id="1.1.1.37"/>
    </reaction>
</comment>
<comment type="subunit">
    <text evidence="1">Homodimer.</text>
</comment>
<comment type="similarity">
    <text evidence="1">Belongs to the LDH/MDH superfamily. MDH type 1 family.</text>
</comment>